<keyword id="KW-0067">ATP-binding</keyword>
<keyword id="KW-0963">Cytoplasm</keyword>
<keyword id="KW-0436">Ligase</keyword>
<keyword id="KW-0547">Nucleotide-binding</keyword>
<keyword id="KW-0819">tRNA processing</keyword>
<sequence>MSDKNSSQKNWTSWHHLLHKEILGNKTLIPDGANLLIAVSGGQDSMALLNLINDMKTQHNWFVNVWHGDHQWHKKSAKYALELKSYCNKKNISFFFDQANKNNISSEEKARDWRYKKLSERANQLLIENQKEIDIYLLTGHTNTDNAETFLLNLARGSNYAGLSNINKKRLLKHHIFLIRPLLIFSREDTKKFCQLQNIPIWEDPTNCDLTIKRNIVRKEIIPILETMYPGCSKRINSFAEKMSNYKNEQNDLSKLASLYCEDAIGVKRELLNSLCIEARCTILNTFLKKDCTKQLSSKNLTHLASSILVKDRGKIDLPDGFEIVWNKDYINLEKN</sequence>
<dbReference type="EC" id="6.3.4.19" evidence="1"/>
<dbReference type="EMBL" id="BX548174">
    <property type="protein sequence ID" value="CAE20110.1"/>
    <property type="molecule type" value="Genomic_DNA"/>
</dbReference>
<dbReference type="RefSeq" id="WP_011133278.1">
    <property type="nucleotide sequence ID" value="NC_005072.1"/>
</dbReference>
<dbReference type="SMR" id="Q7UZL1"/>
<dbReference type="STRING" id="59919.PMM1651"/>
<dbReference type="KEGG" id="pmm:PMM1651"/>
<dbReference type="eggNOG" id="COG0037">
    <property type="taxonomic scope" value="Bacteria"/>
</dbReference>
<dbReference type="HOGENOM" id="CLU_018869_0_0_3"/>
<dbReference type="OrthoDB" id="9807403at2"/>
<dbReference type="Proteomes" id="UP000001026">
    <property type="component" value="Chromosome"/>
</dbReference>
<dbReference type="GO" id="GO:0005737">
    <property type="term" value="C:cytoplasm"/>
    <property type="evidence" value="ECO:0007669"/>
    <property type="project" value="UniProtKB-SubCell"/>
</dbReference>
<dbReference type="GO" id="GO:0005524">
    <property type="term" value="F:ATP binding"/>
    <property type="evidence" value="ECO:0007669"/>
    <property type="project" value="UniProtKB-UniRule"/>
</dbReference>
<dbReference type="GO" id="GO:0032267">
    <property type="term" value="F:tRNA(Ile)-lysidine synthase activity"/>
    <property type="evidence" value="ECO:0007669"/>
    <property type="project" value="UniProtKB-EC"/>
</dbReference>
<dbReference type="GO" id="GO:0006400">
    <property type="term" value="P:tRNA modification"/>
    <property type="evidence" value="ECO:0007669"/>
    <property type="project" value="UniProtKB-UniRule"/>
</dbReference>
<dbReference type="CDD" id="cd01992">
    <property type="entry name" value="TilS_N"/>
    <property type="match status" value="1"/>
</dbReference>
<dbReference type="Gene3D" id="3.40.50.620">
    <property type="entry name" value="HUPs"/>
    <property type="match status" value="1"/>
</dbReference>
<dbReference type="HAMAP" id="MF_01161">
    <property type="entry name" value="tRNA_Ile_lys_synt"/>
    <property type="match status" value="1"/>
</dbReference>
<dbReference type="InterPro" id="IPR014729">
    <property type="entry name" value="Rossmann-like_a/b/a_fold"/>
</dbReference>
<dbReference type="InterPro" id="IPR011063">
    <property type="entry name" value="TilS/TtcA_N"/>
</dbReference>
<dbReference type="InterPro" id="IPR012094">
    <property type="entry name" value="tRNA_Ile_lys_synt"/>
</dbReference>
<dbReference type="InterPro" id="IPR012795">
    <property type="entry name" value="tRNA_Ile_lys_synt_N"/>
</dbReference>
<dbReference type="NCBIfam" id="TIGR02432">
    <property type="entry name" value="lysidine_TilS_N"/>
    <property type="match status" value="1"/>
</dbReference>
<dbReference type="PANTHER" id="PTHR43033">
    <property type="entry name" value="TRNA(ILE)-LYSIDINE SYNTHASE-RELATED"/>
    <property type="match status" value="1"/>
</dbReference>
<dbReference type="PANTHER" id="PTHR43033:SF1">
    <property type="entry name" value="TRNA(ILE)-LYSIDINE SYNTHASE-RELATED"/>
    <property type="match status" value="1"/>
</dbReference>
<dbReference type="Pfam" id="PF01171">
    <property type="entry name" value="ATP_bind_3"/>
    <property type="match status" value="1"/>
</dbReference>
<dbReference type="SUPFAM" id="SSF52402">
    <property type="entry name" value="Adenine nucleotide alpha hydrolases-like"/>
    <property type="match status" value="1"/>
</dbReference>
<protein>
    <recommendedName>
        <fullName evidence="1">tRNA(Ile)-lysidine synthase</fullName>
        <ecNumber evidence="1">6.3.4.19</ecNumber>
    </recommendedName>
    <alternativeName>
        <fullName evidence="1">tRNA(Ile)-2-lysyl-cytidine synthase</fullName>
    </alternativeName>
    <alternativeName>
        <fullName evidence="1">tRNA(Ile)-lysidine synthetase</fullName>
    </alternativeName>
</protein>
<proteinExistence type="inferred from homology"/>
<comment type="function">
    <text evidence="1">Ligates lysine onto the cytidine present at position 34 of the AUA codon-specific tRNA(Ile) that contains the anticodon CAU, in an ATP-dependent manner. Cytidine is converted to lysidine, thus changing the amino acid specificity of the tRNA from methionine to isoleucine.</text>
</comment>
<comment type="catalytic activity">
    <reaction evidence="1">
        <text>cytidine(34) in tRNA(Ile2) + L-lysine + ATP = lysidine(34) in tRNA(Ile2) + AMP + diphosphate + H(+)</text>
        <dbReference type="Rhea" id="RHEA:43744"/>
        <dbReference type="Rhea" id="RHEA-COMP:10625"/>
        <dbReference type="Rhea" id="RHEA-COMP:10670"/>
        <dbReference type="ChEBI" id="CHEBI:15378"/>
        <dbReference type="ChEBI" id="CHEBI:30616"/>
        <dbReference type="ChEBI" id="CHEBI:32551"/>
        <dbReference type="ChEBI" id="CHEBI:33019"/>
        <dbReference type="ChEBI" id="CHEBI:82748"/>
        <dbReference type="ChEBI" id="CHEBI:83665"/>
        <dbReference type="ChEBI" id="CHEBI:456215"/>
        <dbReference type="EC" id="6.3.4.19"/>
    </reaction>
</comment>
<comment type="subcellular location">
    <subcellularLocation>
        <location evidence="1">Cytoplasm</location>
    </subcellularLocation>
</comment>
<comment type="domain">
    <text>The N-terminal region contains the highly conserved SGGXDS motif, predicted to be a P-loop motif involved in ATP binding.</text>
</comment>
<comment type="similarity">
    <text evidence="1">Belongs to the tRNA(Ile)-lysidine synthase family.</text>
</comment>
<reference key="1">
    <citation type="journal article" date="2003" name="Nature">
        <title>Genome divergence in two Prochlorococcus ecotypes reflects oceanic niche differentiation.</title>
        <authorList>
            <person name="Rocap G."/>
            <person name="Larimer F.W."/>
            <person name="Lamerdin J.E."/>
            <person name="Malfatti S."/>
            <person name="Chain P."/>
            <person name="Ahlgren N.A."/>
            <person name="Arellano A."/>
            <person name="Coleman M."/>
            <person name="Hauser L."/>
            <person name="Hess W.R."/>
            <person name="Johnson Z.I."/>
            <person name="Land M.L."/>
            <person name="Lindell D."/>
            <person name="Post A.F."/>
            <person name="Regala W."/>
            <person name="Shah M."/>
            <person name="Shaw S.L."/>
            <person name="Steglich C."/>
            <person name="Sullivan M.B."/>
            <person name="Ting C.S."/>
            <person name="Tolonen A."/>
            <person name="Webb E.A."/>
            <person name="Zinser E.R."/>
            <person name="Chisholm S.W."/>
        </authorList>
    </citation>
    <scope>NUCLEOTIDE SEQUENCE [LARGE SCALE GENOMIC DNA]</scope>
    <source>
        <strain>CCMP1986 / NIES-2087 / MED4</strain>
    </source>
</reference>
<organism>
    <name type="scientific">Prochlorococcus marinus subsp. pastoris (strain CCMP1986 / NIES-2087 / MED4)</name>
    <dbReference type="NCBI Taxonomy" id="59919"/>
    <lineage>
        <taxon>Bacteria</taxon>
        <taxon>Bacillati</taxon>
        <taxon>Cyanobacteriota</taxon>
        <taxon>Cyanophyceae</taxon>
        <taxon>Synechococcales</taxon>
        <taxon>Prochlorococcaceae</taxon>
        <taxon>Prochlorococcus</taxon>
    </lineage>
</organism>
<name>TILS_PROMP</name>
<evidence type="ECO:0000255" key="1">
    <source>
        <dbReference type="HAMAP-Rule" id="MF_01161"/>
    </source>
</evidence>
<gene>
    <name evidence="1" type="primary">tilS</name>
    <name type="ordered locus">PMM1651</name>
</gene>
<feature type="chain" id="PRO_0000181747" description="tRNA(Ile)-lysidine synthase">
    <location>
        <begin position="1"/>
        <end position="336"/>
    </location>
</feature>
<feature type="binding site" evidence="1">
    <location>
        <begin position="40"/>
        <end position="45"/>
    </location>
    <ligand>
        <name>ATP</name>
        <dbReference type="ChEBI" id="CHEBI:30616"/>
    </ligand>
</feature>
<accession>Q7UZL1</accession>